<name>LPXH_YERPG</name>
<sequence>MSTLFIADLHLSVQEPAITAGFLHFIQREAIHADALYILGDLFESWIGDDDPEPLYRQVAAALKSLQQQGVPCYFIHGNRDFLLGKRFAEESGMVLLPEENVVELYGRKILILHGDTLCTDDTDYQHFRKKVHNPLIQKLFLWIPLRLRLRIAAYMRNKSQQNNSGKSERIMDVNSKAVIDAFLRHDVSWMIHGHTHRPAIHSVELPMVTAHRVVLGAWHVEGSMVKVTADNVELITFPF</sequence>
<reference key="1">
    <citation type="journal article" date="2010" name="J. Bacteriol.">
        <title>Genome sequence of the deep-rooted Yersinia pestis strain Angola reveals new insights into the evolution and pangenome of the plague bacterium.</title>
        <authorList>
            <person name="Eppinger M."/>
            <person name="Worsham P.L."/>
            <person name="Nikolich M.P."/>
            <person name="Riley D.R."/>
            <person name="Sebastian Y."/>
            <person name="Mou S."/>
            <person name="Achtman M."/>
            <person name="Lindler L.E."/>
            <person name="Ravel J."/>
        </authorList>
    </citation>
    <scope>NUCLEOTIDE SEQUENCE [LARGE SCALE GENOMIC DNA]</scope>
    <source>
        <strain>Angola</strain>
    </source>
</reference>
<comment type="function">
    <text evidence="1">Hydrolyzes the pyrophosphate bond of UDP-2,3-diacylglucosamine to yield 2,3-diacylglucosamine 1-phosphate (lipid X) and UMP by catalyzing the attack of water at the alpha-P atom. Involved in the biosynthesis of lipid A, a phosphorylated glycolipid that anchors the lipopolysaccharide to the outer membrane of the cell.</text>
</comment>
<comment type="catalytic activity">
    <reaction evidence="1">
        <text>UDP-2-N,3-O-bis[(3R)-3-hydroxytetradecanoyl]-alpha-D-glucosamine + H2O = 2-N,3-O-bis[(3R)-3-hydroxytetradecanoyl]-alpha-D-glucosaminyl 1-phosphate + UMP + 2 H(+)</text>
        <dbReference type="Rhea" id="RHEA:25213"/>
        <dbReference type="ChEBI" id="CHEBI:15377"/>
        <dbReference type="ChEBI" id="CHEBI:15378"/>
        <dbReference type="ChEBI" id="CHEBI:57865"/>
        <dbReference type="ChEBI" id="CHEBI:57957"/>
        <dbReference type="ChEBI" id="CHEBI:78847"/>
        <dbReference type="EC" id="3.6.1.54"/>
    </reaction>
</comment>
<comment type="cofactor">
    <cofactor evidence="1">
        <name>Mn(2+)</name>
        <dbReference type="ChEBI" id="CHEBI:29035"/>
    </cofactor>
    <text evidence="1">Binds 2 Mn(2+) ions per subunit in a binuclear metal center.</text>
</comment>
<comment type="pathway">
    <text evidence="1">Glycolipid biosynthesis; lipid IV(A) biosynthesis; lipid IV(A) from (3R)-3-hydroxytetradecanoyl-[acyl-carrier-protein] and UDP-N-acetyl-alpha-D-glucosamine: step 4/6.</text>
</comment>
<comment type="subcellular location">
    <subcellularLocation>
        <location evidence="1">Cell inner membrane</location>
        <topology evidence="1">Peripheral membrane protein</topology>
        <orientation evidence="1">Cytoplasmic side</orientation>
    </subcellularLocation>
</comment>
<comment type="similarity">
    <text evidence="1">Belongs to the LpxH family.</text>
</comment>
<proteinExistence type="inferred from homology"/>
<keyword id="KW-0997">Cell inner membrane</keyword>
<keyword id="KW-1003">Cell membrane</keyword>
<keyword id="KW-0378">Hydrolase</keyword>
<keyword id="KW-0441">Lipid A biosynthesis</keyword>
<keyword id="KW-0444">Lipid biosynthesis</keyword>
<keyword id="KW-0443">Lipid metabolism</keyword>
<keyword id="KW-0464">Manganese</keyword>
<keyword id="KW-0472">Membrane</keyword>
<keyword id="KW-0479">Metal-binding</keyword>
<feature type="chain" id="PRO_1000129548" description="UDP-2,3-diacylglucosamine hydrolase">
    <location>
        <begin position="1"/>
        <end position="240"/>
    </location>
</feature>
<feature type="binding site" evidence="1">
    <location>
        <position position="8"/>
    </location>
    <ligand>
        <name>Mn(2+)</name>
        <dbReference type="ChEBI" id="CHEBI:29035"/>
        <label>1</label>
    </ligand>
</feature>
<feature type="binding site" evidence="1">
    <location>
        <position position="10"/>
    </location>
    <ligand>
        <name>Mn(2+)</name>
        <dbReference type="ChEBI" id="CHEBI:29035"/>
        <label>1</label>
    </ligand>
</feature>
<feature type="binding site" evidence="1">
    <location>
        <position position="41"/>
    </location>
    <ligand>
        <name>Mn(2+)</name>
        <dbReference type="ChEBI" id="CHEBI:29035"/>
        <label>1</label>
    </ligand>
</feature>
<feature type="binding site" evidence="1">
    <location>
        <position position="41"/>
    </location>
    <ligand>
        <name>Mn(2+)</name>
        <dbReference type="ChEBI" id="CHEBI:29035"/>
        <label>2</label>
    </ligand>
</feature>
<feature type="binding site" evidence="1">
    <location>
        <begin position="79"/>
        <end position="80"/>
    </location>
    <ligand>
        <name>substrate</name>
    </ligand>
</feature>
<feature type="binding site" evidence="1">
    <location>
        <position position="79"/>
    </location>
    <ligand>
        <name>Mn(2+)</name>
        <dbReference type="ChEBI" id="CHEBI:29035"/>
        <label>2</label>
    </ligand>
</feature>
<feature type="binding site" evidence="1">
    <location>
        <position position="114"/>
    </location>
    <ligand>
        <name>Mn(2+)</name>
        <dbReference type="ChEBI" id="CHEBI:29035"/>
        <label>2</label>
    </ligand>
</feature>
<feature type="binding site" evidence="1">
    <location>
        <position position="122"/>
    </location>
    <ligand>
        <name>substrate</name>
    </ligand>
</feature>
<feature type="binding site" evidence="1">
    <location>
        <position position="160"/>
    </location>
    <ligand>
        <name>substrate</name>
    </ligand>
</feature>
<feature type="binding site" evidence="1">
    <location>
        <position position="164"/>
    </location>
    <ligand>
        <name>substrate</name>
    </ligand>
</feature>
<feature type="binding site" evidence="1">
    <location>
        <position position="167"/>
    </location>
    <ligand>
        <name>substrate</name>
    </ligand>
</feature>
<feature type="binding site" evidence="1">
    <location>
        <position position="195"/>
    </location>
    <ligand>
        <name>Mn(2+)</name>
        <dbReference type="ChEBI" id="CHEBI:29035"/>
        <label>2</label>
    </ligand>
</feature>
<feature type="binding site" evidence="1">
    <location>
        <position position="195"/>
    </location>
    <ligand>
        <name>substrate</name>
    </ligand>
</feature>
<feature type="binding site" evidence="1">
    <location>
        <position position="197"/>
    </location>
    <ligand>
        <name>Mn(2+)</name>
        <dbReference type="ChEBI" id="CHEBI:29035"/>
        <label>1</label>
    </ligand>
</feature>
<organism>
    <name type="scientific">Yersinia pestis bv. Antiqua (strain Angola)</name>
    <dbReference type="NCBI Taxonomy" id="349746"/>
    <lineage>
        <taxon>Bacteria</taxon>
        <taxon>Pseudomonadati</taxon>
        <taxon>Pseudomonadota</taxon>
        <taxon>Gammaproteobacteria</taxon>
        <taxon>Enterobacterales</taxon>
        <taxon>Yersiniaceae</taxon>
        <taxon>Yersinia</taxon>
    </lineage>
</organism>
<dbReference type="EC" id="3.6.1.54" evidence="1"/>
<dbReference type="EMBL" id="CP000901">
    <property type="protein sequence ID" value="ABX86994.1"/>
    <property type="molecule type" value="Genomic_DNA"/>
</dbReference>
<dbReference type="RefSeq" id="WP_002208568.1">
    <property type="nucleotide sequence ID" value="NZ_CP009935.1"/>
</dbReference>
<dbReference type="SMR" id="A9R251"/>
<dbReference type="KEGG" id="ypg:YpAngola_A1276"/>
<dbReference type="PATRIC" id="fig|349746.12.peg.2237"/>
<dbReference type="UniPathway" id="UPA00359">
    <property type="reaction ID" value="UER00480"/>
</dbReference>
<dbReference type="GO" id="GO:0005737">
    <property type="term" value="C:cytoplasm"/>
    <property type="evidence" value="ECO:0007669"/>
    <property type="project" value="InterPro"/>
</dbReference>
<dbReference type="GO" id="GO:0019897">
    <property type="term" value="C:extrinsic component of plasma membrane"/>
    <property type="evidence" value="ECO:0007669"/>
    <property type="project" value="UniProtKB-UniRule"/>
</dbReference>
<dbReference type="GO" id="GO:0030145">
    <property type="term" value="F:manganese ion binding"/>
    <property type="evidence" value="ECO:0007669"/>
    <property type="project" value="UniProtKB-UniRule"/>
</dbReference>
<dbReference type="GO" id="GO:0008758">
    <property type="term" value="F:UDP-2,3-diacylglucosamine hydrolase activity"/>
    <property type="evidence" value="ECO:0007669"/>
    <property type="project" value="UniProtKB-UniRule"/>
</dbReference>
<dbReference type="GO" id="GO:0009245">
    <property type="term" value="P:lipid A biosynthetic process"/>
    <property type="evidence" value="ECO:0007669"/>
    <property type="project" value="UniProtKB-UniRule"/>
</dbReference>
<dbReference type="CDD" id="cd07398">
    <property type="entry name" value="MPP_YbbF-LpxH"/>
    <property type="match status" value="1"/>
</dbReference>
<dbReference type="FunFam" id="3.60.21.10:FF:000074">
    <property type="entry name" value="UDP-2,3-diacylglucosamine hydrolase"/>
    <property type="match status" value="1"/>
</dbReference>
<dbReference type="Gene3D" id="3.60.21.10">
    <property type="match status" value="1"/>
</dbReference>
<dbReference type="HAMAP" id="MF_00575">
    <property type="entry name" value="LpxH"/>
    <property type="match status" value="1"/>
</dbReference>
<dbReference type="InterPro" id="IPR004843">
    <property type="entry name" value="Calcineurin-like_PHP_ApaH"/>
</dbReference>
<dbReference type="InterPro" id="IPR043461">
    <property type="entry name" value="LpxH-like"/>
</dbReference>
<dbReference type="InterPro" id="IPR029052">
    <property type="entry name" value="Metallo-depent_PP-like"/>
</dbReference>
<dbReference type="InterPro" id="IPR010138">
    <property type="entry name" value="UDP-diacylglucosamine_Hdrlase"/>
</dbReference>
<dbReference type="NCBIfam" id="TIGR01854">
    <property type="entry name" value="lipid_A_lpxH"/>
    <property type="match status" value="1"/>
</dbReference>
<dbReference type="NCBIfam" id="NF003743">
    <property type="entry name" value="PRK05340.1"/>
    <property type="match status" value="1"/>
</dbReference>
<dbReference type="PANTHER" id="PTHR34990:SF1">
    <property type="entry name" value="UDP-2,3-DIACYLGLUCOSAMINE HYDROLASE"/>
    <property type="match status" value="1"/>
</dbReference>
<dbReference type="PANTHER" id="PTHR34990">
    <property type="entry name" value="UDP-2,3-DIACYLGLUCOSAMINE HYDROLASE-RELATED"/>
    <property type="match status" value="1"/>
</dbReference>
<dbReference type="Pfam" id="PF00149">
    <property type="entry name" value="Metallophos"/>
    <property type="match status" value="1"/>
</dbReference>
<dbReference type="SUPFAM" id="SSF56300">
    <property type="entry name" value="Metallo-dependent phosphatases"/>
    <property type="match status" value="1"/>
</dbReference>
<evidence type="ECO:0000255" key="1">
    <source>
        <dbReference type="HAMAP-Rule" id="MF_00575"/>
    </source>
</evidence>
<accession>A9R251</accession>
<gene>
    <name evidence="1" type="primary">lpxH</name>
    <name type="ordered locus">YpAngola_A1276</name>
</gene>
<protein>
    <recommendedName>
        <fullName evidence="1">UDP-2,3-diacylglucosamine hydrolase</fullName>
        <ecNumber evidence="1">3.6.1.54</ecNumber>
    </recommendedName>
    <alternativeName>
        <fullName evidence="1">UDP-2,3-diacylglucosamine diphosphatase</fullName>
    </alternativeName>
</protein>